<reference key="1">
    <citation type="journal article" date="2007" name="Virology">
        <title>Early cytokine mRNA expression profiles predict Morbillivirus disease outcome in ferrets.</title>
        <authorList>
            <person name="Svitek N."/>
            <person name="von Messling V."/>
        </authorList>
    </citation>
    <scope>NUCLEOTIDE SEQUENCE [MRNA]</scope>
</reference>
<dbReference type="EC" id="1.2.1.12" evidence="1"/>
<dbReference type="EC" id="2.6.99.-" evidence="2"/>
<dbReference type="EMBL" id="EF392835">
    <property type="protein sequence ID" value="ABN54800.1"/>
    <property type="molecule type" value="mRNA"/>
</dbReference>
<dbReference type="SMR" id="A3FKF7"/>
<dbReference type="FunCoup" id="A3FKF7">
    <property type="interactions" value="55"/>
</dbReference>
<dbReference type="STRING" id="9669.ENSMPUP00000016786"/>
<dbReference type="eggNOG" id="KOG0657">
    <property type="taxonomic scope" value="Eukaryota"/>
</dbReference>
<dbReference type="InParanoid" id="A3FKF7"/>
<dbReference type="OrthoDB" id="9817610at2759"/>
<dbReference type="UniPathway" id="UPA00109">
    <property type="reaction ID" value="UER00184"/>
</dbReference>
<dbReference type="Proteomes" id="UP000000715">
    <property type="component" value="Unplaced"/>
</dbReference>
<dbReference type="GO" id="GO:0005737">
    <property type="term" value="C:cytoplasm"/>
    <property type="evidence" value="ECO:0000250"/>
    <property type="project" value="UniProtKB"/>
</dbReference>
<dbReference type="GO" id="GO:0005829">
    <property type="term" value="C:cytosol"/>
    <property type="evidence" value="ECO:0000250"/>
    <property type="project" value="UniProtKB"/>
</dbReference>
<dbReference type="GO" id="GO:0097452">
    <property type="term" value="C:GAIT complex"/>
    <property type="evidence" value="ECO:0000250"/>
    <property type="project" value="UniProtKB"/>
</dbReference>
<dbReference type="GO" id="GO:0015630">
    <property type="term" value="C:microtubule cytoskeleton"/>
    <property type="evidence" value="ECO:0000250"/>
    <property type="project" value="UniProtKB"/>
</dbReference>
<dbReference type="GO" id="GO:0005634">
    <property type="term" value="C:nucleus"/>
    <property type="evidence" value="ECO:0000250"/>
    <property type="project" value="UniProtKB"/>
</dbReference>
<dbReference type="GO" id="GO:0004365">
    <property type="term" value="F:glyceraldehyde-3-phosphate dehydrogenase (NAD+) (phosphorylating) activity"/>
    <property type="evidence" value="ECO:0000250"/>
    <property type="project" value="UniProtKB"/>
</dbReference>
<dbReference type="GO" id="GO:0008017">
    <property type="term" value="F:microtubule binding"/>
    <property type="evidence" value="ECO:0000250"/>
    <property type="project" value="UniProtKB"/>
</dbReference>
<dbReference type="GO" id="GO:0051287">
    <property type="term" value="F:NAD binding"/>
    <property type="evidence" value="ECO:0007669"/>
    <property type="project" value="InterPro"/>
</dbReference>
<dbReference type="GO" id="GO:0050661">
    <property type="term" value="F:NADP binding"/>
    <property type="evidence" value="ECO:0007669"/>
    <property type="project" value="InterPro"/>
</dbReference>
<dbReference type="GO" id="GO:0035605">
    <property type="term" value="F:peptidyl-cysteine S-nitrosylase activity"/>
    <property type="evidence" value="ECO:0000250"/>
    <property type="project" value="UniProtKB"/>
</dbReference>
<dbReference type="GO" id="GO:0006006">
    <property type="term" value="P:glucose metabolic process"/>
    <property type="evidence" value="ECO:0007669"/>
    <property type="project" value="InterPro"/>
</dbReference>
<dbReference type="GO" id="GO:0006096">
    <property type="term" value="P:glycolytic process"/>
    <property type="evidence" value="ECO:0007669"/>
    <property type="project" value="UniProtKB-UniPathway"/>
</dbReference>
<dbReference type="GO" id="GO:0045087">
    <property type="term" value="P:innate immune response"/>
    <property type="evidence" value="ECO:0007669"/>
    <property type="project" value="UniProtKB-KW"/>
</dbReference>
<dbReference type="GO" id="GO:0000226">
    <property type="term" value="P:microtubule cytoskeleton organization"/>
    <property type="evidence" value="ECO:0000250"/>
    <property type="project" value="UniProtKB"/>
</dbReference>
<dbReference type="GO" id="GO:0051402">
    <property type="term" value="P:neuron apoptotic process"/>
    <property type="evidence" value="ECO:0000250"/>
    <property type="project" value="UniProtKB"/>
</dbReference>
<dbReference type="GO" id="GO:0035606">
    <property type="term" value="P:peptidyl-cysteine S-trans-nitrosylation"/>
    <property type="evidence" value="ECO:0000250"/>
    <property type="project" value="UniProtKB"/>
</dbReference>
<dbReference type="GO" id="GO:0043123">
    <property type="term" value="P:positive regulation of canonical NF-kappaB signal transduction"/>
    <property type="evidence" value="ECO:0000250"/>
    <property type="project" value="UniProtKB"/>
</dbReference>
<dbReference type="GO" id="GO:0032481">
    <property type="term" value="P:positive regulation of type I interferon production"/>
    <property type="evidence" value="ECO:0000250"/>
    <property type="project" value="UniProtKB"/>
</dbReference>
<dbReference type="GO" id="GO:0050821">
    <property type="term" value="P:protein stabilization"/>
    <property type="evidence" value="ECO:0000250"/>
    <property type="project" value="UniProtKB"/>
</dbReference>
<dbReference type="GO" id="GO:0006417">
    <property type="term" value="P:regulation of translation"/>
    <property type="evidence" value="ECO:0007669"/>
    <property type="project" value="UniProtKB-KW"/>
</dbReference>
<dbReference type="CDD" id="cd18126">
    <property type="entry name" value="GAPDH_I_C"/>
    <property type="match status" value="1"/>
</dbReference>
<dbReference type="CDD" id="cd05214">
    <property type="entry name" value="GAPDH_I_N"/>
    <property type="match status" value="1"/>
</dbReference>
<dbReference type="FunFam" id="3.30.360.10:FF:000001">
    <property type="entry name" value="Glyceraldehyde-3-phosphate dehydrogenase"/>
    <property type="match status" value="1"/>
</dbReference>
<dbReference type="FunFam" id="3.40.50.720:FF:001161">
    <property type="entry name" value="Glyceraldehyde-3-phosphate dehydrogenase"/>
    <property type="match status" value="1"/>
</dbReference>
<dbReference type="FunFam" id="3.40.50.720:FF:000636">
    <property type="entry name" value="Glyceraldehyde-3-phosphate dehydrogenase 2, cytosolic"/>
    <property type="match status" value="1"/>
</dbReference>
<dbReference type="Gene3D" id="3.30.360.10">
    <property type="entry name" value="Dihydrodipicolinate Reductase, domain 2"/>
    <property type="match status" value="1"/>
</dbReference>
<dbReference type="Gene3D" id="3.40.50.720">
    <property type="entry name" value="NAD(P)-binding Rossmann-like Domain"/>
    <property type="match status" value="1"/>
</dbReference>
<dbReference type="InterPro" id="IPR020831">
    <property type="entry name" value="GlycerAld/Erythrose_P_DH"/>
</dbReference>
<dbReference type="InterPro" id="IPR020830">
    <property type="entry name" value="GlycerAld_3-P_DH_AS"/>
</dbReference>
<dbReference type="InterPro" id="IPR020829">
    <property type="entry name" value="GlycerAld_3-P_DH_cat"/>
</dbReference>
<dbReference type="InterPro" id="IPR020828">
    <property type="entry name" value="GlycerAld_3-P_DH_NAD(P)-bd"/>
</dbReference>
<dbReference type="InterPro" id="IPR006424">
    <property type="entry name" value="Glyceraldehyde-3-P_DH_1"/>
</dbReference>
<dbReference type="InterPro" id="IPR036291">
    <property type="entry name" value="NAD(P)-bd_dom_sf"/>
</dbReference>
<dbReference type="NCBIfam" id="TIGR01534">
    <property type="entry name" value="GAPDH-I"/>
    <property type="match status" value="1"/>
</dbReference>
<dbReference type="PANTHER" id="PTHR10836">
    <property type="entry name" value="GLYCERALDEHYDE 3-PHOSPHATE DEHYDROGENASE"/>
    <property type="match status" value="1"/>
</dbReference>
<dbReference type="PANTHER" id="PTHR10836:SF111">
    <property type="entry name" value="GLYCERALDEHYDE-3-PHOSPHATE DEHYDROGENASE"/>
    <property type="match status" value="1"/>
</dbReference>
<dbReference type="Pfam" id="PF02800">
    <property type="entry name" value="Gp_dh_C"/>
    <property type="match status" value="1"/>
</dbReference>
<dbReference type="Pfam" id="PF00044">
    <property type="entry name" value="Gp_dh_N"/>
    <property type="match status" value="1"/>
</dbReference>
<dbReference type="PIRSF" id="PIRSF000149">
    <property type="entry name" value="GAP_DH"/>
    <property type="match status" value="1"/>
</dbReference>
<dbReference type="PRINTS" id="PR00078">
    <property type="entry name" value="G3PDHDRGNASE"/>
</dbReference>
<dbReference type="SMART" id="SM00846">
    <property type="entry name" value="Gp_dh_N"/>
    <property type="match status" value="1"/>
</dbReference>
<dbReference type="SUPFAM" id="SSF55347">
    <property type="entry name" value="Glyceraldehyde-3-phosphate dehydrogenase-like, C-terminal domain"/>
    <property type="match status" value="1"/>
</dbReference>
<dbReference type="SUPFAM" id="SSF51735">
    <property type="entry name" value="NAD(P)-binding Rossmann-fold domains"/>
    <property type="match status" value="1"/>
</dbReference>
<dbReference type="PROSITE" id="PS00071">
    <property type="entry name" value="GAPDH"/>
    <property type="match status" value="1"/>
</dbReference>
<feature type="chain" id="PRO_0000310944" description="Glyceraldehyde-3-phosphate dehydrogenase">
    <location>
        <begin position="1"/>
        <end position="333"/>
    </location>
</feature>
<feature type="region of interest" description="Interaction with WARS1" evidence="1">
    <location>
        <begin position="1"/>
        <end position="146"/>
    </location>
</feature>
<feature type="short sequence motif" description="[IL]-x-C-x-x-[DE] motif" evidence="1">
    <location>
        <begin position="243"/>
        <end position="248"/>
    </location>
</feature>
<feature type="active site" description="Nucleophile" evidence="6">
    <location>
        <position position="150"/>
    </location>
</feature>
<feature type="binding site" evidence="1">
    <location>
        <begin position="11"/>
        <end position="12"/>
    </location>
    <ligand>
        <name>NAD(+)</name>
        <dbReference type="ChEBI" id="CHEBI:57540"/>
    </ligand>
</feature>
<feature type="binding site" evidence="1">
    <location>
        <position position="33"/>
    </location>
    <ligand>
        <name>NAD(+)</name>
        <dbReference type="ChEBI" id="CHEBI:57540"/>
    </ligand>
</feature>
<feature type="binding site" evidence="1">
    <location>
        <position position="78"/>
    </location>
    <ligand>
        <name>NAD(+)</name>
        <dbReference type="ChEBI" id="CHEBI:57540"/>
    </ligand>
</feature>
<feature type="binding site" evidence="1">
    <location>
        <position position="120"/>
    </location>
    <ligand>
        <name>NAD(+)</name>
        <dbReference type="ChEBI" id="CHEBI:57540"/>
    </ligand>
</feature>
<feature type="binding site" evidence="5">
    <location>
        <begin position="149"/>
        <end position="151"/>
    </location>
    <ligand>
        <name>D-glyceraldehyde 3-phosphate</name>
        <dbReference type="ChEBI" id="CHEBI:59776"/>
    </ligand>
</feature>
<feature type="binding site" evidence="5">
    <location>
        <position position="180"/>
    </location>
    <ligand>
        <name>D-glyceraldehyde 3-phosphate</name>
        <dbReference type="ChEBI" id="CHEBI:59776"/>
    </ligand>
</feature>
<feature type="binding site" evidence="5">
    <location>
        <begin position="209"/>
        <end position="210"/>
    </location>
    <ligand>
        <name>D-glyceraldehyde 3-phosphate</name>
        <dbReference type="ChEBI" id="CHEBI:59776"/>
    </ligand>
</feature>
<feature type="binding site" evidence="5">
    <location>
        <position position="232"/>
    </location>
    <ligand>
        <name>D-glyceraldehyde 3-phosphate</name>
        <dbReference type="ChEBI" id="CHEBI:59776"/>
    </ligand>
</feature>
<feature type="binding site" evidence="1">
    <location>
        <position position="314"/>
    </location>
    <ligand>
        <name>NAD(+)</name>
        <dbReference type="ChEBI" id="CHEBI:57540"/>
    </ligand>
</feature>
<feature type="site" description="Activates thiol group during catalysis" evidence="1">
    <location>
        <position position="177"/>
    </location>
</feature>
<feature type="modified residue" description="N6,N6-dimethyllysine" evidence="1">
    <location>
        <position position="3"/>
    </location>
</feature>
<feature type="modified residue" description="Deamidated asparagine" evidence="1">
    <location>
        <position position="7"/>
    </location>
</feature>
<feature type="modified residue" description="Phosphotyrosine" evidence="1">
    <location>
        <position position="40"/>
    </location>
</feature>
<feature type="modified residue" description="N6-acetyllysine" evidence="1">
    <location>
        <position position="59"/>
    </location>
</feature>
<feature type="modified residue" description="Deamidated asparagine" evidence="1">
    <location>
        <position position="62"/>
    </location>
</feature>
<feature type="modified residue" description="N6,N6-dimethyllysine" evidence="1">
    <location>
        <position position="64"/>
    </location>
</feature>
<feature type="modified residue" description="Deamidated asparagine" evidence="1">
    <location>
        <position position="68"/>
    </location>
</feature>
<feature type="modified residue" description="Phosphoserine" evidence="1">
    <location>
        <position position="120"/>
    </location>
</feature>
<feature type="modified residue" description="Phosphoserine" evidence="1">
    <location>
        <position position="146"/>
    </location>
</feature>
<feature type="modified residue" description="Deamidated asparagine" evidence="1">
    <location>
        <position position="147"/>
    </location>
</feature>
<feature type="modified residue" description="Phosphoserine" evidence="1">
    <location>
        <position position="149"/>
    </location>
</feature>
<feature type="modified residue" description="ADP-ribosylcysteine; by autocatalysis; in irreversibly inhibited form" evidence="2">
    <location>
        <position position="150"/>
    </location>
</feature>
<feature type="modified residue" description="Cysteine persulfide" evidence="4">
    <location>
        <position position="150"/>
    </location>
</feature>
<feature type="modified residue" description="S-(2-succinyl)cysteine" evidence="2">
    <location>
        <position position="150"/>
    </location>
</feature>
<feature type="modified residue" description="S-nitrosocysteine; in reversibly inhibited form" evidence="2">
    <location>
        <position position="150"/>
    </location>
</feature>
<feature type="modified residue" description="Phosphothreonine" evidence="1">
    <location>
        <position position="151"/>
    </location>
</feature>
<feature type="modified residue" description="Deamidated asparagine" evidence="1">
    <location>
        <position position="153"/>
    </location>
</feature>
<feature type="modified residue" description="Phosphothreonine" evidence="1">
    <location>
        <position position="175"/>
    </location>
</feature>
<feature type="modified residue" description="Phosphothreonine" evidence="1">
    <location>
        <position position="180"/>
    </location>
</feature>
<feature type="modified residue" description="Phosphothreonine" evidence="1">
    <location>
        <position position="182"/>
    </location>
</feature>
<feature type="modified residue" description="N6,N6-dimethyllysine; alternate" evidence="1">
    <location>
        <position position="192"/>
    </location>
</feature>
<feature type="modified residue" description="N6-acetyllysine; alternate" evidence="1">
    <location>
        <position position="192"/>
    </location>
</feature>
<feature type="modified residue" description="N6-malonyllysine; alternate" evidence="1">
    <location>
        <position position="192"/>
    </location>
</feature>
<feature type="modified residue" description="Phosphothreonine" evidence="1">
    <location>
        <position position="209"/>
    </location>
</feature>
<feature type="modified residue" description="N6,N6-dimethyllysine; alternate" evidence="1">
    <location>
        <position position="213"/>
    </location>
</feature>
<feature type="modified residue" description="N6-malonyllysine; alternate" evidence="1">
    <location>
        <position position="213"/>
    </location>
</feature>
<feature type="modified residue" description="N6-acetyllysine" evidence="1">
    <location>
        <position position="217"/>
    </location>
</feature>
<feature type="modified residue" description="Deamidated asparagine" evidence="1">
    <location>
        <position position="223"/>
    </location>
</feature>
<feature type="modified residue" description="N6,N6-dimethyllysine; alternate" evidence="1">
    <location>
        <position position="225"/>
    </location>
</feature>
<feature type="modified residue" description="N6-acetyllysine; alternate" evidence="1">
    <location>
        <position position="225"/>
    </location>
</feature>
<feature type="modified residue" description="Phosphothreonine" evidence="1">
    <location>
        <position position="227"/>
    </location>
</feature>
<feature type="modified residue" description="Phosphothreonine" evidence="1">
    <location>
        <position position="235"/>
    </location>
</feature>
<feature type="modified residue" description="Phosphoserine" evidence="1">
    <location>
        <position position="239"/>
    </location>
</feature>
<feature type="modified residue" description="S-(2-succinyl)cysteine" evidence="2">
    <location>
        <position position="245"/>
    </location>
</feature>
<feature type="modified residue" description="S-nitrosocysteine" evidence="1">
    <location>
        <position position="245"/>
    </location>
</feature>
<feature type="modified residue" description="N6-acetyllysine" evidence="1">
    <location>
        <position position="252"/>
    </location>
</feature>
<feature type="modified residue" description="N6,N6-dimethyllysine" evidence="1">
    <location>
        <position position="258"/>
    </location>
</feature>
<feature type="modified residue" description="N6,N6-dimethyllysine" evidence="1">
    <location>
        <position position="261"/>
    </location>
</feature>
<feature type="modified residue" description="Phosphoserine" evidence="1">
    <location>
        <position position="310"/>
    </location>
</feature>
<feature type="modified residue" description="Deamidated asparagine" evidence="1">
    <location>
        <position position="314"/>
    </location>
</feature>
<feature type="modified residue" description="Phosphoserine" evidence="1">
    <location>
        <position position="331"/>
    </location>
</feature>
<feature type="modified residue" description="N6,N6-dimethyllysine" evidence="1">
    <location>
        <position position="332"/>
    </location>
</feature>
<feature type="cross-link" description="Glycyl lysine isopeptide (Lys-Gly) (interchain with G-Cter in SUMO2)" evidence="1">
    <location>
        <position position="184"/>
    </location>
</feature>
<keyword id="KW-0007">Acetylation</keyword>
<keyword id="KW-0013">ADP-ribosylation</keyword>
<keyword id="KW-0053">Apoptosis</keyword>
<keyword id="KW-0963">Cytoplasm</keyword>
<keyword id="KW-0206">Cytoskeleton</keyword>
<keyword id="KW-0324">Glycolysis</keyword>
<keyword id="KW-0391">Immunity</keyword>
<keyword id="KW-0399">Innate immunity</keyword>
<keyword id="KW-1017">Isopeptide bond</keyword>
<keyword id="KW-0488">Methylation</keyword>
<keyword id="KW-0520">NAD</keyword>
<keyword id="KW-0539">Nucleus</keyword>
<keyword id="KW-0560">Oxidoreductase</keyword>
<keyword id="KW-0597">Phosphoprotein</keyword>
<keyword id="KW-1185">Reference proteome</keyword>
<keyword id="KW-0702">S-nitrosylation</keyword>
<keyword id="KW-0808">Transferase</keyword>
<keyword id="KW-0810">Translation regulation</keyword>
<keyword id="KW-0832">Ubl conjugation</keyword>
<evidence type="ECO:0000250" key="1">
    <source>
        <dbReference type="UniProtKB" id="P04406"/>
    </source>
</evidence>
<evidence type="ECO:0000250" key="2">
    <source>
        <dbReference type="UniProtKB" id="P04797"/>
    </source>
</evidence>
<evidence type="ECO:0000250" key="3">
    <source>
        <dbReference type="UniProtKB" id="P10096"/>
    </source>
</evidence>
<evidence type="ECO:0000250" key="4">
    <source>
        <dbReference type="UniProtKB" id="P16858"/>
    </source>
</evidence>
<evidence type="ECO:0000250" key="5">
    <source>
        <dbReference type="UniProtKB" id="P22513"/>
    </source>
</evidence>
<evidence type="ECO:0000255" key="6">
    <source>
        <dbReference type="PROSITE-ProRule" id="PRU10009"/>
    </source>
</evidence>
<evidence type="ECO:0000305" key="7"/>
<organism>
    <name type="scientific">Mustela putorius furo</name>
    <name type="common">European domestic ferret</name>
    <name type="synonym">Mustela furo</name>
    <dbReference type="NCBI Taxonomy" id="9669"/>
    <lineage>
        <taxon>Eukaryota</taxon>
        <taxon>Metazoa</taxon>
        <taxon>Chordata</taxon>
        <taxon>Craniata</taxon>
        <taxon>Vertebrata</taxon>
        <taxon>Euteleostomi</taxon>
        <taxon>Mammalia</taxon>
        <taxon>Eutheria</taxon>
        <taxon>Laurasiatheria</taxon>
        <taxon>Carnivora</taxon>
        <taxon>Caniformia</taxon>
        <taxon>Musteloidea</taxon>
        <taxon>Mustelidae</taxon>
        <taxon>Mustelinae</taxon>
        <taxon>Mustela</taxon>
    </lineage>
</organism>
<protein>
    <recommendedName>
        <fullName>Glyceraldehyde-3-phosphate dehydrogenase</fullName>
        <shortName>GAPDH</shortName>
        <ecNumber evidence="1">1.2.1.12</ecNumber>
    </recommendedName>
    <alternativeName>
        <fullName evidence="7">Peptidyl-cysteine S-nitrosylase GAPDH</fullName>
        <ecNumber evidence="2">2.6.99.-</ecNumber>
    </alternativeName>
</protein>
<accession>A3FKF7</accession>
<sequence>MVKVGVNGFGRIGRLVTRAAFNSGKVDIVAINDPFIDLNYMVYMFQYDSTHGKFHGTVKAENGKLVINGKSISIFQERDPANIKWGDAGAEYVVESTGVFTTMEKAGAHLKGGAKRVIISAPSADAPMFVMGVNHEKYDNSLKIVSNASCTTNCLAPLAKVIHDNFGIVEGLMTTVHAITATQKTVDGPSGKLWRDGRGAAQNIIPASTGAAKAVGKVIPELNGKLTGMAFRVPTPNVSVVDLTCRLEKAAKYDDIKKVVKQASEGPLKGILGYTEDQVVSCDFNSDTHSSTFDAGAGIALNDHFVKLISWYDNEFGYSNRVVDLMVYMASKE</sequence>
<comment type="function">
    <text evidence="1 2">Has both glyceraldehyde-3-phosphate dehydrogenase and nitrosylase activities, thereby playing a role in glycolysis and nuclear functions, respectively. Glyceraldehyde-3-phosphate dehydrogenase is a key enzyme in glycolysis that catalyzes the first step of the pathway by converting D-glyceraldehyde 3-phosphate (G3P) into 3-phospho-D-glyceroyl phosphate (By similarity). Modulates the organization and assembly of the cytoskeleton. Facilitates the CHP1-dependent microtubule and membrane associations through its ability to stimulate the binding of CHP1 to microtubules (By similarity). Component of the GAIT (gamma interferon-activated inhibitor of translation) complex which mediates interferon-gamma-induced transcript-selective translation inhibition in inflammation processes. Upon interferon-gamma treatment assembles into the GAIT complex which binds to stem loop-containing GAIT elements in the 3'-UTR of diverse inflammatory mRNAs (such as ceruplasmin) and suppresses their translation. Also plays a role in innate immunity by promoting TNF-induced NF-kappa-B activation and type I interferon production, via interaction with TRAF2 and TRAF3, respectively (By similarity). Participates in nuclear events including transcription, RNA transport, DNA replication and apoptosis. Nuclear functions are probably due to the nitrosylase activity that mediates cysteine S-nitrosylation of nuclear target proteins such as SIRT1, HDAC2 and PRKDC (By similarity).</text>
</comment>
<comment type="catalytic activity">
    <reaction evidence="1 6">
        <text>D-glyceraldehyde 3-phosphate + phosphate + NAD(+) = (2R)-3-phospho-glyceroyl phosphate + NADH + H(+)</text>
        <dbReference type="Rhea" id="RHEA:10300"/>
        <dbReference type="ChEBI" id="CHEBI:15378"/>
        <dbReference type="ChEBI" id="CHEBI:43474"/>
        <dbReference type="ChEBI" id="CHEBI:57540"/>
        <dbReference type="ChEBI" id="CHEBI:57604"/>
        <dbReference type="ChEBI" id="CHEBI:57945"/>
        <dbReference type="ChEBI" id="CHEBI:59776"/>
        <dbReference type="EC" id="1.2.1.12"/>
    </reaction>
</comment>
<comment type="catalytic activity">
    <reaction evidence="2">
        <text>S-nitroso-L-cysteinyl-[GAPDH] + L-cysteinyl-[protein] = L-cysteinyl-[GAPDH] + S-nitroso-L-cysteinyl-[protein]</text>
        <dbReference type="Rhea" id="RHEA:66684"/>
        <dbReference type="Rhea" id="RHEA-COMP:10131"/>
        <dbReference type="Rhea" id="RHEA-COMP:17089"/>
        <dbReference type="Rhea" id="RHEA-COMP:17090"/>
        <dbReference type="Rhea" id="RHEA-COMP:17091"/>
        <dbReference type="ChEBI" id="CHEBI:29950"/>
        <dbReference type="ChEBI" id="CHEBI:149494"/>
    </reaction>
    <physiologicalReaction direction="left-to-right" evidence="2">
        <dbReference type="Rhea" id="RHEA:66685"/>
    </physiologicalReaction>
</comment>
<comment type="activity regulation">
    <text evidence="2">Glyceraldehyde-3-phosphate dehydrogenase activity is inhibited by fumarate, via the formation of S-(2-succinyl)cysteine residues.</text>
</comment>
<comment type="pathway">
    <text>Carbohydrate degradation; glycolysis; pyruvate from D-glyceraldehyde 3-phosphate: step 1/5.</text>
</comment>
<comment type="subunit">
    <text evidence="1 2 3">Homotetramer (By similarity). Interacts with TPPP; the interaction is direct (By similarity). Interacts (when S-nitrosylated) with SIAH1; leading to nuclear translocation. Interacts with RILPL1/GOSPEL, leading to prevent the interaction between GAPDH and SIAH1 and prevent nuclear translocation. Interacts with CHP1; the interaction increases the binding of CHP1 with microtubules. Associates with microtubules (By similarity). Interacts with EIF1AD, USP25, PRKCI and WARS1. Interacts with phosphorylated RPL13A; inhibited by oxidatively-modified low-densitity lipoprotein (LDL(ox)). Component of the GAIT complex. Interacts with FKBP6; leading to inhibit GAPDH catalytic activity. Interacts with TRAF2, promoting TRAF2 ubiquitination. Interacts with TRAF3, promoting TRAF3 ubiquitination (By similarity).</text>
</comment>
<comment type="subcellular location">
    <subcellularLocation>
        <location evidence="2">Cytoplasm</location>
        <location evidence="2">Cytosol</location>
    </subcellularLocation>
    <subcellularLocation>
        <location evidence="2">Cytoplasm</location>
        <location evidence="2">Cytoskeleton</location>
    </subcellularLocation>
    <subcellularLocation>
        <location evidence="2">Nucleus</location>
    </subcellularLocation>
    <text evidence="2">Translocates to the nucleus following S-nitrosylation and interaction with SIAH1, which contains a nuclear localization signal. Colocalizes with CHP1 to small punctate structures along the microtubules tracks.</text>
</comment>
<comment type="domain">
    <text evidence="1">The [IL]-x-C-x-x-[DE] motif is a proposed target motif for cysteine S-nitrosylation mediated by the iNOS-S100A8/A9 transnitrosylase complex.</text>
</comment>
<comment type="PTM">
    <text evidence="1">ISGylated.</text>
</comment>
<comment type="PTM">
    <text evidence="1 2">S-nitrosylation of Cys-150 leads to interaction with SIAH1, followed by translocation to the nucleus S-nitrosylation of Cys-245 is induced by interferon-gamma and LDL(ox) implicating the iNOS-S100A8/9 transnitrosylase complex and seems to prevent interaction with phosphorylated RPL13A and to interfere with GAIT complex activity (By similarity).</text>
</comment>
<comment type="PTM">
    <text evidence="4">Sulfhydration at Cys-150 increases catalytic activity.</text>
</comment>
<comment type="similarity">
    <text evidence="7">Belongs to the glyceraldehyde-3-phosphate dehydrogenase family.</text>
</comment>
<name>G3P_MUSPF</name>
<proteinExistence type="evidence at transcript level"/>
<gene>
    <name type="primary">GAPDH</name>
</gene>